<proteinExistence type="evidence at protein level"/>
<organism>
    <name type="scientific">Rattus norvegicus</name>
    <name type="common">Rat</name>
    <dbReference type="NCBI Taxonomy" id="10116"/>
    <lineage>
        <taxon>Eukaryota</taxon>
        <taxon>Metazoa</taxon>
        <taxon>Chordata</taxon>
        <taxon>Craniata</taxon>
        <taxon>Vertebrata</taxon>
        <taxon>Euteleostomi</taxon>
        <taxon>Mammalia</taxon>
        <taxon>Eutheria</taxon>
        <taxon>Euarchontoglires</taxon>
        <taxon>Glires</taxon>
        <taxon>Rodentia</taxon>
        <taxon>Myomorpha</taxon>
        <taxon>Muroidea</taxon>
        <taxon>Muridae</taxon>
        <taxon>Murinae</taxon>
        <taxon>Rattus</taxon>
    </lineage>
</organism>
<name>CATD_RAT</name>
<keyword id="KW-0002">3D-structure</keyword>
<keyword id="KW-0064">Aspartyl protease</keyword>
<keyword id="KW-0903">Direct protein sequencing</keyword>
<keyword id="KW-1015">Disulfide bond</keyword>
<keyword id="KW-0325">Glycoprotein</keyword>
<keyword id="KW-0378">Hydrolase</keyword>
<keyword id="KW-0458">Lysosome</keyword>
<keyword id="KW-0645">Protease</keyword>
<keyword id="KW-1185">Reference proteome</keyword>
<keyword id="KW-0964">Secreted</keyword>
<keyword id="KW-0732">Signal</keyword>
<keyword id="KW-0865">Zymogen</keyword>
<comment type="function">
    <text evidence="2">Acid protease active in intracellular protein breakdown. Plays a role in APP processing following cleavage and activation by ADAM30 which leads to APP degradation.</text>
</comment>
<comment type="catalytic activity">
    <reaction>
        <text>Specificity similar to, but narrower than, that of pepsin A. Does not cleave the 4-Gln-|-His-5 bond in B chain of insulin.</text>
        <dbReference type="EC" id="3.4.23.5"/>
    </reaction>
</comment>
<comment type="subunit">
    <text evidence="2 6">Occurs as a mixture of both a single chain form and two types of two chain (light and heavy) forms (PubMed:1883350). Interacts with ADAM30; this leads to activation of CTSD (By similarity).</text>
</comment>
<comment type="subcellular location">
    <subcellularLocation>
        <location>Lysosome</location>
    </subcellularLocation>
    <subcellularLocation>
        <location evidence="1">Melanosome</location>
    </subcellularLocation>
    <subcellularLocation>
        <location evidence="1">Secreted</location>
        <location evidence="1">Extracellular space</location>
    </subcellularLocation>
</comment>
<comment type="PTM">
    <text evidence="2">N- and O-glycosylated.</text>
</comment>
<comment type="PTM">
    <text evidence="2">Undergoes proteolytic cleavage and activation by ADAM30.</text>
</comment>
<comment type="similarity">
    <text evidence="7">Belongs to the peptidase A1 family.</text>
</comment>
<accession>P24268</accession>
<feature type="signal peptide" evidence="3">
    <location>
        <begin position="1"/>
        <end position="20"/>
    </location>
</feature>
<feature type="propeptide" id="PRO_0000025958" description="Activation peptide" evidence="3">
    <location>
        <begin position="21"/>
        <end position="64"/>
    </location>
</feature>
<feature type="chain" id="PRO_0000025959" description="Cathepsin D">
    <location>
        <begin position="65"/>
        <end position="407"/>
    </location>
</feature>
<feature type="chain" id="PRO_0000025960" description="Cathepsin D 12 kDa light chain">
    <location>
        <begin position="65"/>
        <end position="164"/>
    </location>
</feature>
<feature type="chain" id="PRO_0000025961" description="Cathepsin D 9 kDa light chain">
    <location>
        <begin position="65"/>
        <end position="117"/>
    </location>
</feature>
<feature type="chain" id="PRO_0000025962" description="Cathepsin D 34 kDa heavy chain">
    <location>
        <begin position="118"/>
        <end position="407"/>
    </location>
</feature>
<feature type="chain" id="PRO_0000025963" description="Cathepsin D 30 kDa heavy chain">
    <location>
        <begin position="165"/>
        <end position="407"/>
    </location>
</feature>
<feature type="domain" description="Peptidase A1" evidence="4">
    <location>
        <begin position="79"/>
        <end position="402"/>
    </location>
</feature>
<feature type="active site" evidence="5">
    <location>
        <position position="97"/>
    </location>
</feature>
<feature type="active site" evidence="5">
    <location>
        <position position="290"/>
    </location>
</feature>
<feature type="glycosylation site" description="N-linked (GlcNAc...) asparagine" evidence="3">
    <location>
        <position position="134"/>
    </location>
</feature>
<feature type="glycosylation site" description="N-linked (GlcNAc...) asparagine" evidence="8">
    <location>
        <position position="258"/>
    </location>
</feature>
<feature type="disulfide bond" evidence="1">
    <location>
        <begin position="91"/>
        <end position="160"/>
    </location>
</feature>
<feature type="disulfide bond" evidence="1">
    <location>
        <begin position="110"/>
        <end position="117"/>
    </location>
</feature>
<feature type="disulfide bond" evidence="1">
    <location>
        <begin position="281"/>
        <end position="285"/>
    </location>
</feature>
<feature type="disulfide bond" evidence="1">
    <location>
        <begin position="324"/>
        <end position="361"/>
    </location>
</feature>
<feature type="sequence conflict" description="In Ref. 2; AA sequence." evidence="7" ref="2">
    <original>D</original>
    <variation>A</variation>
    <location>
        <position position="15"/>
    </location>
</feature>
<feature type="sequence conflict" description="In Ref. 3; AA sequence." evidence="7" ref="3">
    <original>D</original>
    <variation>T</variation>
    <location>
        <position position="163"/>
    </location>
</feature>
<feature type="sequence conflict" description="In Ref. 2; AA sequence." evidence="7" ref="2">
    <original>K</original>
    <variation>N</variation>
    <location>
        <position position="205"/>
    </location>
</feature>
<feature type="sequence conflict" description="In Ref. 2; AA sequence." evidence="7" ref="2">
    <original>K</original>
    <variation>N</variation>
    <location>
        <position position="262"/>
    </location>
</feature>
<feature type="strand" evidence="9">
    <location>
        <begin position="67"/>
        <end position="74"/>
    </location>
</feature>
<feature type="turn" evidence="9">
    <location>
        <begin position="75"/>
        <end position="77"/>
    </location>
</feature>
<feature type="strand" evidence="9">
    <location>
        <begin position="78"/>
        <end position="85"/>
    </location>
</feature>
<feature type="turn" evidence="9">
    <location>
        <begin position="86"/>
        <end position="89"/>
    </location>
</feature>
<feature type="strand" evidence="9">
    <location>
        <begin position="90"/>
        <end position="97"/>
    </location>
</feature>
<feature type="strand" evidence="9">
    <location>
        <begin position="103"/>
        <end position="107"/>
    </location>
</feature>
<feature type="helix" evidence="9">
    <location>
        <begin position="115"/>
        <end position="118"/>
    </location>
</feature>
<feature type="helix" evidence="9">
    <location>
        <begin position="125"/>
        <end position="127"/>
    </location>
</feature>
<feature type="strand" evidence="9">
    <location>
        <begin position="132"/>
        <end position="141"/>
    </location>
</feature>
<feature type="strand" evidence="9">
    <location>
        <begin position="146"/>
        <end position="159"/>
    </location>
</feature>
<feature type="strand" evidence="9">
    <location>
        <begin position="167"/>
        <end position="179"/>
    </location>
</feature>
<feature type="helix" evidence="9">
    <location>
        <begin position="184"/>
        <end position="187"/>
    </location>
</feature>
<feature type="strand" evidence="9">
    <location>
        <begin position="189"/>
        <end position="195"/>
    </location>
</feature>
<feature type="helix" evidence="9">
    <location>
        <begin position="199"/>
        <end position="201"/>
    </location>
</feature>
<feature type="helix" evidence="9">
    <location>
        <begin position="203"/>
        <end position="205"/>
    </location>
</feature>
<feature type="helix" evidence="9">
    <location>
        <begin position="209"/>
        <end position="215"/>
    </location>
</feature>
<feature type="strand" evidence="9">
    <location>
        <begin position="219"/>
        <end position="228"/>
    </location>
</feature>
<feature type="strand" evidence="9">
    <location>
        <begin position="234"/>
        <end position="244"/>
    </location>
</feature>
<feature type="helix" evidence="9">
    <location>
        <begin position="247"/>
        <end position="249"/>
    </location>
</feature>
<feature type="strand" evidence="9">
    <location>
        <begin position="255"/>
        <end position="258"/>
    </location>
</feature>
<feature type="turn" evidence="9">
    <location>
        <begin position="262"/>
        <end position="265"/>
    </location>
</feature>
<feature type="strand" evidence="9">
    <location>
        <begin position="266"/>
        <end position="269"/>
    </location>
</feature>
<feature type="strand" evidence="9">
    <location>
        <begin position="271"/>
        <end position="274"/>
    </location>
</feature>
<feature type="turn" evidence="9">
    <location>
        <begin position="275"/>
        <end position="277"/>
    </location>
</feature>
<feature type="strand" evidence="9">
    <location>
        <begin position="278"/>
        <end position="281"/>
    </location>
</feature>
<feature type="strand" evidence="9">
    <location>
        <begin position="285"/>
        <end position="289"/>
    </location>
</feature>
<feature type="strand" evidence="9">
    <location>
        <begin position="294"/>
        <end position="298"/>
    </location>
</feature>
<feature type="helix" evidence="9">
    <location>
        <begin position="300"/>
        <end position="309"/>
    </location>
</feature>
<feature type="strand" evidence="9">
    <location>
        <begin position="316"/>
        <end position="318"/>
    </location>
</feature>
<feature type="helix" evidence="9">
    <location>
        <begin position="327"/>
        <end position="329"/>
    </location>
</feature>
<feature type="strand" evidence="9">
    <location>
        <begin position="333"/>
        <end position="337"/>
    </location>
</feature>
<feature type="strand" evidence="9">
    <location>
        <begin position="340"/>
        <end position="344"/>
    </location>
</feature>
<feature type="turn" evidence="9">
    <location>
        <begin position="346"/>
        <end position="348"/>
    </location>
</feature>
<feature type="strand" evidence="9">
    <location>
        <begin position="349"/>
        <end position="353"/>
    </location>
</feature>
<feature type="strand" evidence="9">
    <location>
        <begin position="355"/>
        <end position="357"/>
    </location>
</feature>
<feature type="strand" evidence="9">
    <location>
        <begin position="360"/>
        <end position="367"/>
    </location>
</feature>
<feature type="turn" evidence="9">
    <location>
        <begin position="372"/>
        <end position="374"/>
    </location>
</feature>
<feature type="strand" evidence="9">
    <location>
        <begin position="378"/>
        <end position="380"/>
    </location>
</feature>
<feature type="helix" evidence="9">
    <location>
        <begin position="382"/>
        <end position="385"/>
    </location>
</feature>
<feature type="strand" evidence="9">
    <location>
        <begin position="388"/>
        <end position="393"/>
    </location>
</feature>
<feature type="turn" evidence="9">
    <location>
        <begin position="394"/>
        <end position="397"/>
    </location>
</feature>
<feature type="strand" evidence="9">
    <location>
        <begin position="398"/>
        <end position="404"/>
    </location>
</feature>
<dbReference type="EC" id="3.4.23.5"/>
<dbReference type="EMBL" id="X54467">
    <property type="protein sequence ID" value="CAA38349.1"/>
    <property type="molecule type" value="mRNA"/>
</dbReference>
<dbReference type="PIR" id="S13111">
    <property type="entry name" value="KHRTD"/>
</dbReference>
<dbReference type="PDB" id="5UX4">
    <property type="method" value="X-ray"/>
    <property type="resolution" value="2.81 A"/>
    <property type="chains" value="A/B=21-407"/>
</dbReference>
<dbReference type="PDBsum" id="5UX4"/>
<dbReference type="SMR" id="P24268"/>
<dbReference type="FunCoup" id="P24268">
    <property type="interactions" value="1394"/>
</dbReference>
<dbReference type="IntAct" id="P24268">
    <property type="interactions" value="1"/>
</dbReference>
<dbReference type="STRING" id="10116.ENSRNOP00000027407"/>
<dbReference type="MEROPS" id="A01.009"/>
<dbReference type="GlyCosmos" id="P24268">
    <property type="glycosylation" value="2 sites, 4 glycans"/>
</dbReference>
<dbReference type="GlyGen" id="P24268">
    <property type="glycosylation" value="4 sites, 5 N-linked glycans (2 sites), 1 O-linked glycan (2 sites)"/>
</dbReference>
<dbReference type="iPTMnet" id="P24268"/>
<dbReference type="PhosphoSitePlus" id="P24268"/>
<dbReference type="SwissPalm" id="P24268"/>
<dbReference type="jPOST" id="P24268"/>
<dbReference type="PaxDb" id="10116-ENSRNOP00000027407"/>
<dbReference type="UCSC" id="RGD:621511">
    <property type="organism name" value="rat"/>
</dbReference>
<dbReference type="AGR" id="RGD:621511"/>
<dbReference type="RGD" id="621511">
    <property type="gene designation" value="Ctsd"/>
</dbReference>
<dbReference type="eggNOG" id="KOG1339">
    <property type="taxonomic scope" value="Eukaryota"/>
</dbReference>
<dbReference type="InParanoid" id="P24268"/>
<dbReference type="PhylomeDB" id="P24268"/>
<dbReference type="BRENDA" id="3.4.23.5">
    <property type="organism ID" value="5301"/>
</dbReference>
<dbReference type="Reactome" id="R-RNO-1442490">
    <property type="pathway name" value="Collagen degradation"/>
</dbReference>
<dbReference type="Reactome" id="R-RNO-2022377">
    <property type="pathway name" value="Metabolism of Angiotensinogen to Angiotensins"/>
</dbReference>
<dbReference type="Reactome" id="R-RNO-2132295">
    <property type="pathway name" value="MHC class II antigen presentation"/>
</dbReference>
<dbReference type="Reactome" id="R-RNO-6798695">
    <property type="pathway name" value="Neutrophil degranulation"/>
</dbReference>
<dbReference type="Reactome" id="R-RNO-77387">
    <property type="pathway name" value="Insulin receptor recycling"/>
</dbReference>
<dbReference type="PRO" id="PR:P24268"/>
<dbReference type="Proteomes" id="UP000002494">
    <property type="component" value="Unplaced"/>
</dbReference>
<dbReference type="GO" id="GO:0005829">
    <property type="term" value="C:cytosol"/>
    <property type="evidence" value="ECO:0000266"/>
    <property type="project" value="RGD"/>
</dbReference>
<dbReference type="GO" id="GO:0031904">
    <property type="term" value="C:endosome lumen"/>
    <property type="evidence" value="ECO:0000266"/>
    <property type="project" value="RGD"/>
</dbReference>
<dbReference type="GO" id="GO:0010008">
    <property type="term" value="C:endosome membrane"/>
    <property type="evidence" value="ECO:0000266"/>
    <property type="project" value="RGD"/>
</dbReference>
<dbReference type="GO" id="GO:0005615">
    <property type="term" value="C:extracellular space"/>
    <property type="evidence" value="ECO:0000266"/>
    <property type="project" value="RGD"/>
</dbReference>
<dbReference type="GO" id="GO:0098982">
    <property type="term" value="C:GABA-ergic synapse"/>
    <property type="evidence" value="ECO:0000314"/>
    <property type="project" value="SynGO"/>
</dbReference>
<dbReference type="GO" id="GO:0005765">
    <property type="term" value="C:lysosomal membrane"/>
    <property type="evidence" value="ECO:0000266"/>
    <property type="project" value="RGD"/>
</dbReference>
<dbReference type="GO" id="GO:0005764">
    <property type="term" value="C:lysosome"/>
    <property type="evidence" value="ECO:0000266"/>
    <property type="project" value="RGD"/>
</dbReference>
<dbReference type="GO" id="GO:0042470">
    <property type="term" value="C:melanosome"/>
    <property type="evidence" value="ECO:0007669"/>
    <property type="project" value="UniProtKB-SubCell"/>
</dbReference>
<dbReference type="GO" id="GO:0045121">
    <property type="term" value="C:membrane raft"/>
    <property type="evidence" value="ECO:0000266"/>
    <property type="project" value="RGD"/>
</dbReference>
<dbReference type="GO" id="GO:0098830">
    <property type="term" value="C:presynaptic endosome"/>
    <property type="evidence" value="ECO:0000314"/>
    <property type="project" value="SynGO"/>
</dbReference>
<dbReference type="GO" id="GO:0004190">
    <property type="term" value="F:aspartic-type endopeptidase activity"/>
    <property type="evidence" value="ECO:0000266"/>
    <property type="project" value="RGD"/>
</dbReference>
<dbReference type="GO" id="GO:0070001">
    <property type="term" value="F:aspartic-type peptidase activity"/>
    <property type="evidence" value="ECO:0000266"/>
    <property type="project" value="RGD"/>
</dbReference>
<dbReference type="GO" id="GO:0004175">
    <property type="term" value="F:endopeptidase activity"/>
    <property type="evidence" value="ECO:0000314"/>
    <property type="project" value="RGD"/>
</dbReference>
<dbReference type="GO" id="GO:0016787">
    <property type="term" value="F:hydrolase activity"/>
    <property type="evidence" value="ECO:0000266"/>
    <property type="project" value="RGD"/>
</dbReference>
<dbReference type="GO" id="GO:0008233">
    <property type="term" value="F:peptidase activity"/>
    <property type="evidence" value="ECO:0000266"/>
    <property type="project" value="RGD"/>
</dbReference>
<dbReference type="GO" id="GO:0042277">
    <property type="term" value="F:peptide binding"/>
    <property type="evidence" value="ECO:0000314"/>
    <property type="project" value="RGD"/>
</dbReference>
<dbReference type="GO" id="GO:0000045">
    <property type="term" value="P:autophagosome assembly"/>
    <property type="evidence" value="ECO:0000266"/>
    <property type="project" value="RGD"/>
</dbReference>
<dbReference type="GO" id="GO:0097194">
    <property type="term" value="P:execution phase of apoptosis"/>
    <property type="evidence" value="ECO:0000266"/>
    <property type="project" value="RGD"/>
</dbReference>
<dbReference type="GO" id="GO:1901143">
    <property type="term" value="P:insulin catabolic process"/>
    <property type="evidence" value="ECO:0000266"/>
    <property type="project" value="RGD"/>
</dbReference>
<dbReference type="GO" id="GO:0038020">
    <property type="term" value="P:insulin receptor recycling"/>
    <property type="evidence" value="ECO:0000266"/>
    <property type="project" value="RGD"/>
</dbReference>
<dbReference type="GO" id="GO:0042159">
    <property type="term" value="P:lipoprotein catabolic process"/>
    <property type="evidence" value="ECO:0000266"/>
    <property type="project" value="RGD"/>
</dbReference>
<dbReference type="GO" id="GO:0043065">
    <property type="term" value="P:positive regulation of apoptotic process"/>
    <property type="evidence" value="ECO:0000266"/>
    <property type="project" value="RGD"/>
</dbReference>
<dbReference type="GO" id="GO:0030163">
    <property type="term" value="P:protein catabolic process"/>
    <property type="evidence" value="ECO:0000314"/>
    <property type="project" value="RGD"/>
</dbReference>
<dbReference type="GO" id="GO:0006508">
    <property type="term" value="P:proteolysis"/>
    <property type="evidence" value="ECO:0000266"/>
    <property type="project" value="RGD"/>
</dbReference>
<dbReference type="GO" id="GO:0070201">
    <property type="term" value="P:regulation of establishment of protein localization"/>
    <property type="evidence" value="ECO:0000266"/>
    <property type="project" value="RGD"/>
</dbReference>
<dbReference type="GO" id="GO:0031667">
    <property type="term" value="P:response to nutrient levels"/>
    <property type="evidence" value="ECO:0000270"/>
    <property type="project" value="RGD"/>
</dbReference>
<dbReference type="GO" id="GO:0099532">
    <property type="term" value="P:synaptic vesicle endosomal processing"/>
    <property type="evidence" value="ECO:0000314"/>
    <property type="project" value="SynGO"/>
</dbReference>
<dbReference type="GO" id="GO:0099003">
    <property type="term" value="P:vesicle-mediated transport in synapse"/>
    <property type="evidence" value="ECO:0000314"/>
    <property type="project" value="SynGO"/>
</dbReference>
<dbReference type="CDD" id="cd05490">
    <property type="entry name" value="Cathepsin_D2"/>
    <property type="match status" value="1"/>
</dbReference>
<dbReference type="FunFam" id="2.40.70.10:FF:000039">
    <property type="entry name" value="Cathepsin D preproprotein"/>
    <property type="match status" value="1"/>
</dbReference>
<dbReference type="FunFam" id="2.40.70.10:FF:000047">
    <property type="entry name" value="Cathepsin D preproprotein"/>
    <property type="match status" value="1"/>
</dbReference>
<dbReference type="Gene3D" id="2.40.70.10">
    <property type="entry name" value="Acid Proteases"/>
    <property type="match status" value="2"/>
</dbReference>
<dbReference type="InterPro" id="IPR001461">
    <property type="entry name" value="Aspartic_peptidase_A1"/>
</dbReference>
<dbReference type="InterPro" id="IPR001969">
    <property type="entry name" value="Aspartic_peptidase_AS"/>
</dbReference>
<dbReference type="InterPro" id="IPR012848">
    <property type="entry name" value="Aspartic_peptidase_N"/>
</dbReference>
<dbReference type="InterPro" id="IPR033144">
    <property type="entry name" value="Cathepsin_D"/>
</dbReference>
<dbReference type="InterPro" id="IPR033121">
    <property type="entry name" value="PEPTIDASE_A1"/>
</dbReference>
<dbReference type="InterPro" id="IPR021109">
    <property type="entry name" value="Peptidase_aspartic_dom_sf"/>
</dbReference>
<dbReference type="PANTHER" id="PTHR47966">
    <property type="entry name" value="BETA-SITE APP-CLEAVING ENZYME, ISOFORM A-RELATED"/>
    <property type="match status" value="1"/>
</dbReference>
<dbReference type="PANTHER" id="PTHR47966:SF42">
    <property type="entry name" value="CATHEPSIN D"/>
    <property type="match status" value="1"/>
</dbReference>
<dbReference type="Pfam" id="PF07966">
    <property type="entry name" value="A1_Propeptide"/>
    <property type="match status" value="1"/>
</dbReference>
<dbReference type="Pfam" id="PF00026">
    <property type="entry name" value="Asp"/>
    <property type="match status" value="1"/>
</dbReference>
<dbReference type="PRINTS" id="PR00792">
    <property type="entry name" value="PEPSIN"/>
</dbReference>
<dbReference type="SUPFAM" id="SSF50630">
    <property type="entry name" value="Acid proteases"/>
    <property type="match status" value="1"/>
</dbReference>
<dbReference type="PROSITE" id="PS00141">
    <property type="entry name" value="ASP_PROTEASE"/>
    <property type="match status" value="2"/>
</dbReference>
<dbReference type="PROSITE" id="PS51767">
    <property type="entry name" value="PEPTIDASE_A1"/>
    <property type="match status" value="1"/>
</dbReference>
<protein>
    <recommendedName>
        <fullName>Cathepsin D</fullName>
        <ecNumber>3.4.23.5</ecNumber>
    </recommendedName>
    <component>
        <recommendedName>
            <fullName>Cathepsin D 12 kDa light chain</fullName>
        </recommendedName>
    </component>
    <component>
        <recommendedName>
            <fullName>Cathepsin D 9 kDa light chain</fullName>
        </recommendedName>
    </component>
    <component>
        <recommendedName>
            <fullName>Cathepsin D 34 kDa heavy chain</fullName>
        </recommendedName>
    </component>
    <component>
        <recommendedName>
            <fullName>Cathepsin D 30 kDa heavy chain</fullName>
        </recommendedName>
    </component>
</protein>
<sequence length="407" mass="44681">MQTPGVLLLILGLLDASSSALIRIPLRKFTSIRRTMTEVGGSVEDLILKGPITKYSMQSSPRTKEPVSELLKNYLDAQYYGEIGIGTPPQCFTVVFDTGSSNLWVPSIHCKLLDIACWVHHKYNSDKSSTYVKNGTSFDIHYGSGSLSGYLSQDTVSVPCKSDLGGIKVEKQIFGEATKQPGVVFIAAKFDGILGMGYPFISVNKVLPVFDNLMKQKLVEKNIFSFYLNRDPTGQPGGELMLGGTDSRYYHGELSYLNVTRKAYWQVHMDQLEVGSELTLCKGGCEAIVDTGTSLLVGPVDEVKELQKAIGAVPLIQGEYMIPCEKVSSLPIITFKLGGQNYELHPEKYILKVSQAGKTICLSGFMGMDIPPPSGPLWILGDVFIGCYYTVFDREYNRVGFAKAATL</sequence>
<evidence type="ECO:0000250" key="1"/>
<evidence type="ECO:0000250" key="2">
    <source>
        <dbReference type="UniProtKB" id="P07339"/>
    </source>
</evidence>
<evidence type="ECO:0000255" key="3"/>
<evidence type="ECO:0000255" key="4">
    <source>
        <dbReference type="PROSITE-ProRule" id="PRU01103"/>
    </source>
</evidence>
<evidence type="ECO:0000255" key="5">
    <source>
        <dbReference type="PROSITE-ProRule" id="PRU10094"/>
    </source>
</evidence>
<evidence type="ECO:0000269" key="6">
    <source>
    </source>
</evidence>
<evidence type="ECO:0000305" key="7"/>
<evidence type="ECO:0007744" key="8">
    <source>
    </source>
</evidence>
<evidence type="ECO:0007829" key="9">
    <source>
        <dbReference type="PDB" id="5UX4"/>
    </source>
</evidence>
<reference key="1">
    <citation type="journal article" date="1990" name="Nucleic Acids Res.">
        <title>Cloning, sequence and expression of rat cathepsin D.</title>
        <authorList>
            <person name="Birch N.P."/>
            <person name="Loh Y.P."/>
        </authorList>
    </citation>
    <scope>NUCLEOTIDE SEQUENCE [MRNA]</scope>
    <source>
        <strain>Sprague-Dawley</strain>
        <tissue>Pituitary</tissue>
    </source>
</reference>
<reference key="2">
    <citation type="journal article" date="1991" name="Biochem. Biophys. Res. Commun.">
        <title>Isolation and sequencing of a cDNA clone encoding rat liver lysosomal cathepsin D and the structure of three forms of mature enzymes.</title>
        <authorList>
            <person name="Fujita H."/>
            <person name="Tanaka Y."/>
            <person name="Noguchi Y."/>
            <person name="Kono A."/>
            <person name="Himeno M."/>
            <person name="Kato K."/>
        </authorList>
    </citation>
    <scope>NUCLEOTIDE SEQUENCE [MRNA]</scope>
    <scope>PROTEIN SEQUENCE OF 65-74; 118-127 AND 165-174</scope>
    <scope>SUBUNIT</scope>
    <source>
        <tissue>Liver</tissue>
    </source>
</reference>
<reference key="3">
    <citation type="journal article" date="1988" name="J. Biol. Chem.">
        <title>Structures at the proteolytic processing region of cathepsin D.</title>
        <authorList>
            <person name="Yonezawa S."/>
            <person name="Takahashi T."/>
            <person name="Wang X."/>
            <person name="Wong R.N.S."/>
            <person name="Hartsuck J.A."/>
            <person name="Tang J."/>
        </authorList>
    </citation>
    <scope>PROTEIN SEQUENCE OF 134-170</scope>
</reference>
<reference key="4">
    <citation type="submission" date="2007-09" db="UniProtKB">
        <authorList>
            <person name="Lubec G."/>
            <person name="Afjehi-Sadat L."/>
            <person name="Kang S.U."/>
            <person name="Lubec S."/>
        </authorList>
    </citation>
    <scope>PROTEIN SEQUENCE OF 35-62; 65-72; 172-189; 222-248; 283-304 AND 309-348</scope>
    <scope>IDENTIFICATION BY MASS SPECTROMETRY</scope>
    <source>
        <strain>Sprague-Dawley</strain>
        <tissue>Brain</tissue>
        <tissue>Spinal cord</tissue>
    </source>
</reference>
<reference key="5">
    <citation type="journal article" date="2013" name="J. Proteome Res.">
        <title>Site-specific glycan-peptide analysis for determination of N-glycoproteome heterogeneity.</title>
        <authorList>
            <person name="Parker B.L."/>
            <person name="Thaysen-Andersen M."/>
            <person name="Solis N."/>
            <person name="Scott N.E."/>
            <person name="Larsen M.R."/>
            <person name="Graham M.E."/>
            <person name="Packer N.H."/>
            <person name="Cordwell S.J."/>
        </authorList>
    </citation>
    <scope>GLYCOSYLATION [LARGE SCALE ANALYSIS] AT ASN-258</scope>
    <scope>IDENTIFICATION BY MASS SPECTROMETRY [LARGE SCALE ANALYSIS]</scope>
    <source>
        <tissue>Brain</tissue>
    </source>
</reference>
<gene>
    <name type="primary">Ctsd</name>
</gene>